<comment type="similarity">
    <text evidence="2">Belongs to the avian keratin family.</text>
</comment>
<protein>
    <recommendedName>
        <fullName>Beta-keratin-related protein</fullName>
    </recommendedName>
</protein>
<reference key="1">
    <citation type="journal article" date="1995" name="Proc. Natl. Acad. Sci. U.S.A.">
        <title>Specific activation in jun-transformed avian fibroblasts of a gene (bkj) related to the avian beta-keratin gene family.</title>
        <authorList>
            <person name="Hartl M."/>
            <person name="Bister K."/>
        </authorList>
    </citation>
    <scope>NUCLEOTIDE SEQUENCE [GENOMIC DNA / MRNA]</scope>
</reference>
<reference key="2">
    <citation type="journal article" date="1998" name="Oncogene">
        <title>Structure and transcriptional regulation of BKJ, a novel AP-1 target gene activated during jun- or fos-induced fibroblast transformation.</title>
        <authorList>
            <person name="Hartl M."/>
            <person name="Bister K."/>
        </authorList>
    </citation>
    <scope>NUCLEOTIDE SEQUENCE [GENOMIC DNA]</scope>
</reference>
<gene>
    <name type="primary">BKJ</name>
</gene>
<accession>Q92012</accession>
<evidence type="ECO:0000250" key="1"/>
<evidence type="ECO:0000305" key="2"/>
<keyword id="KW-0007">Acetylation</keyword>
<keyword id="KW-0416">Keratin</keyword>
<keyword id="KW-1185">Reference proteome</keyword>
<proteinExistence type="inferred from homology"/>
<name>KRFJ_COTJA</name>
<organism>
    <name type="scientific">Coturnix japonica</name>
    <name type="common">Japanese quail</name>
    <name type="synonym">Coturnix coturnix japonica</name>
    <dbReference type="NCBI Taxonomy" id="93934"/>
    <lineage>
        <taxon>Eukaryota</taxon>
        <taxon>Metazoa</taxon>
        <taxon>Chordata</taxon>
        <taxon>Craniata</taxon>
        <taxon>Vertebrata</taxon>
        <taxon>Euteleostomi</taxon>
        <taxon>Archelosauria</taxon>
        <taxon>Archosauria</taxon>
        <taxon>Dinosauria</taxon>
        <taxon>Saurischia</taxon>
        <taxon>Theropoda</taxon>
        <taxon>Coelurosauria</taxon>
        <taxon>Aves</taxon>
        <taxon>Neognathae</taxon>
        <taxon>Galloanserae</taxon>
        <taxon>Galliformes</taxon>
        <taxon>Phasianidae</taxon>
        <taxon>Perdicinae</taxon>
        <taxon>Coturnix</taxon>
    </lineage>
</organism>
<sequence>MSCYSPCQTVACGPAPLANSCNEPCVLRCADSSVAIQPPPVVVTLPGPILSSFPQSTAVGSTASAAVGSSLSAGSVPVGARGSLGLGGFGWSGLGRGLCGTLGRGNVFC</sequence>
<dbReference type="EMBL" id="U56840">
    <property type="protein sequence ID" value="AAC23543.1"/>
    <property type="molecule type" value="Genomic_DNA"/>
</dbReference>
<dbReference type="EMBL" id="U30824">
    <property type="protein sequence ID" value="AAC59731.1"/>
    <property type="molecule type" value="mRNA"/>
</dbReference>
<dbReference type="Ensembl" id="ENSCJPT00005022522.1">
    <property type="protein sequence ID" value="ENSCJPP00005015965.1"/>
    <property type="gene ID" value="ENSCJPG00005013165.1"/>
</dbReference>
<dbReference type="Ensembl" id="ENSCJPT00005022523.1">
    <property type="protein sequence ID" value="ENSCJPP00005015966.1"/>
    <property type="gene ID" value="ENSCJPG00005013166.1"/>
</dbReference>
<dbReference type="GeneTree" id="ENSGT01030000234722"/>
<dbReference type="Proteomes" id="UP000694412">
    <property type="component" value="Chromosome 6"/>
</dbReference>
<dbReference type="GO" id="GO:0005882">
    <property type="term" value="C:intermediate filament"/>
    <property type="evidence" value="ECO:0007669"/>
    <property type="project" value="UniProtKB-KW"/>
</dbReference>
<dbReference type="GO" id="GO:0005200">
    <property type="term" value="F:structural constituent of cytoskeleton"/>
    <property type="evidence" value="ECO:0007669"/>
    <property type="project" value="InterPro"/>
</dbReference>
<dbReference type="InterPro" id="IPR003461">
    <property type="entry name" value="Keratin"/>
</dbReference>
<dbReference type="PANTHER" id="PTHR31203">
    <property type="entry name" value="BETA-KERATIN-RELATED PROTEIN-RELATED"/>
    <property type="match status" value="1"/>
</dbReference>
<dbReference type="PANTHER" id="PTHR31203:SF1">
    <property type="entry name" value="BETA-KERATIN-RELATED PROTEIN-RELATED"/>
    <property type="match status" value="1"/>
</dbReference>
<dbReference type="Pfam" id="PF02422">
    <property type="entry name" value="Keratin"/>
    <property type="match status" value="1"/>
</dbReference>
<feature type="initiator methionine" description="Removed" evidence="1">
    <location>
        <position position="1"/>
    </location>
</feature>
<feature type="chain" id="PRO_0000097010" description="Beta-keratin-related protein">
    <location>
        <begin position="2"/>
        <end position="109"/>
    </location>
</feature>
<feature type="modified residue" description="N-acetylserine" evidence="1">
    <location>
        <position position="2"/>
    </location>
</feature>